<name>SWET1_ARATH</name>
<proteinExistence type="evidence at protein level"/>
<evidence type="ECO:0000255" key="1"/>
<evidence type="ECO:0000256" key="2">
    <source>
        <dbReference type="SAM" id="MobiDB-lite"/>
    </source>
</evidence>
<evidence type="ECO:0000269" key="3">
    <source>
    </source>
</evidence>
<evidence type="ECO:0000269" key="4">
    <source>
    </source>
</evidence>
<evidence type="ECO:0000303" key="5">
    <source>
    </source>
</evidence>
<evidence type="ECO:0000305" key="6"/>
<evidence type="ECO:0000312" key="7">
    <source>
        <dbReference type="EMBL" id="AAF87899.1"/>
    </source>
</evidence>
<evidence type="ECO:0000312" key="8">
    <source>
        <dbReference type="EMBL" id="AEE30104.1"/>
    </source>
</evidence>
<dbReference type="EMBL" id="AC015447">
    <property type="protein sequence ID" value="AAF87899.1"/>
    <property type="status" value="ALT_SEQ"/>
    <property type="molecule type" value="Genomic_DNA"/>
</dbReference>
<dbReference type="EMBL" id="CP002684">
    <property type="protein sequence ID" value="AEE30104.1"/>
    <property type="molecule type" value="Genomic_DNA"/>
</dbReference>
<dbReference type="EMBL" id="BT004185">
    <property type="protein sequence ID" value="AAO42204.1"/>
    <property type="molecule type" value="mRNA"/>
</dbReference>
<dbReference type="EMBL" id="BT005476">
    <property type="protein sequence ID" value="AAO63896.1"/>
    <property type="molecule type" value="mRNA"/>
</dbReference>
<dbReference type="EMBL" id="AY088391">
    <property type="protein sequence ID" value="AAM65929.1"/>
    <property type="molecule type" value="mRNA"/>
</dbReference>
<dbReference type="PIR" id="F86347">
    <property type="entry name" value="F86347"/>
</dbReference>
<dbReference type="RefSeq" id="NP_564140.1">
    <property type="nucleotide sequence ID" value="NM_101997.3"/>
</dbReference>
<dbReference type="SMR" id="Q8L9J7"/>
<dbReference type="BioGRID" id="23983">
    <property type="interactions" value="15"/>
</dbReference>
<dbReference type="DIP" id="DIP-61791N"/>
<dbReference type="FunCoup" id="Q8L9J7">
    <property type="interactions" value="679"/>
</dbReference>
<dbReference type="IntAct" id="Q8L9J7">
    <property type="interactions" value="9"/>
</dbReference>
<dbReference type="STRING" id="3702.Q8L9J7"/>
<dbReference type="TCDB" id="2.A.123.1.9">
    <property type="family name" value="the sweet, pq-loop, saliva, mtn3 (sweet) family"/>
</dbReference>
<dbReference type="PaxDb" id="3702-AT1G21460.1"/>
<dbReference type="EnsemblPlants" id="AT1G21460.1">
    <property type="protein sequence ID" value="AT1G21460.1"/>
    <property type="gene ID" value="AT1G21460"/>
</dbReference>
<dbReference type="GeneID" id="838744"/>
<dbReference type="Gramene" id="AT1G21460.1">
    <property type="protein sequence ID" value="AT1G21460.1"/>
    <property type="gene ID" value="AT1G21460"/>
</dbReference>
<dbReference type="KEGG" id="ath:AT1G21460"/>
<dbReference type="Araport" id="AT1G21460"/>
<dbReference type="TAIR" id="AT1G21460">
    <property type="gene designation" value="SWEET1"/>
</dbReference>
<dbReference type="eggNOG" id="KOG1623">
    <property type="taxonomic scope" value="Eukaryota"/>
</dbReference>
<dbReference type="HOGENOM" id="CLU_048643_1_0_1"/>
<dbReference type="InParanoid" id="Q8L9J7"/>
<dbReference type="OMA" id="MEMGVAK"/>
<dbReference type="OrthoDB" id="409725at2759"/>
<dbReference type="PhylomeDB" id="Q8L9J7"/>
<dbReference type="PRO" id="PR:Q8L9J7"/>
<dbReference type="Proteomes" id="UP000006548">
    <property type="component" value="Chromosome 1"/>
</dbReference>
<dbReference type="ExpressionAtlas" id="Q8L9J7">
    <property type="expression patterns" value="baseline and differential"/>
</dbReference>
<dbReference type="GO" id="GO:0005783">
    <property type="term" value="C:endoplasmic reticulum"/>
    <property type="evidence" value="ECO:0000314"/>
    <property type="project" value="TAIR"/>
</dbReference>
<dbReference type="GO" id="GO:0005789">
    <property type="term" value="C:endoplasmic reticulum membrane"/>
    <property type="evidence" value="ECO:0000314"/>
    <property type="project" value="UniProtKB"/>
</dbReference>
<dbReference type="GO" id="GO:0005886">
    <property type="term" value="C:plasma membrane"/>
    <property type="evidence" value="ECO:0000314"/>
    <property type="project" value="UniProtKB"/>
</dbReference>
<dbReference type="GO" id="GO:0051119">
    <property type="term" value="F:sugar transmembrane transporter activity"/>
    <property type="evidence" value="ECO:0000314"/>
    <property type="project" value="UniProtKB"/>
</dbReference>
<dbReference type="GO" id="GO:0051260">
    <property type="term" value="P:protein homooligomerization"/>
    <property type="evidence" value="ECO:0000314"/>
    <property type="project" value="UniProtKB"/>
</dbReference>
<dbReference type="FunFam" id="1.20.1280.290:FF:000002">
    <property type="entry name" value="Bidirectional sugar transporter SWEET"/>
    <property type="match status" value="1"/>
</dbReference>
<dbReference type="FunFam" id="1.20.1280.290:FF:000014">
    <property type="entry name" value="Bidirectional sugar transporter SWEET"/>
    <property type="match status" value="1"/>
</dbReference>
<dbReference type="Gene3D" id="1.20.1280.290">
    <property type="match status" value="2"/>
</dbReference>
<dbReference type="InterPro" id="IPR047664">
    <property type="entry name" value="SWEET"/>
</dbReference>
<dbReference type="InterPro" id="IPR004316">
    <property type="entry name" value="SWEET_rpt"/>
</dbReference>
<dbReference type="PANTHER" id="PTHR10791:SF44">
    <property type="entry name" value="BIDIRECTIONAL SUGAR TRANSPORTER SWEET1"/>
    <property type="match status" value="1"/>
</dbReference>
<dbReference type="PANTHER" id="PTHR10791">
    <property type="entry name" value="RAG1-ACTIVATING PROTEIN 1"/>
    <property type="match status" value="1"/>
</dbReference>
<dbReference type="Pfam" id="PF03083">
    <property type="entry name" value="MtN3_slv"/>
    <property type="match status" value="2"/>
</dbReference>
<sequence>MNIAHTIFGVFGNATALFLFLAPSITFKRIIKNKSTEQFSGIPYPMTLLNCLLSAWYGLPFVSKDNTLVSTINGTGAVIETVYVLIFLFYAPKKEKIKIFGIFSCVLAVFATVALVSLFALQGNGRKLFCGLAATVFSIIMYASPLSIMRLVVKTKSVEFMPFFLSLFVFLCGTSWFVYGLIGRDPFVAIPNGFGCALGTLQLILYFIYCGNKGEKSADAQKDEKSVEMKDDEKKQNVVNGKQDLQV</sequence>
<gene>
    <name evidence="5" type="primary">SWEET1</name>
    <name evidence="8" type="ordered locus">At1g21460</name>
    <name evidence="7" type="ORF">F24J8.9</name>
</gene>
<reference key="1">
    <citation type="journal article" date="2000" name="Nature">
        <title>Sequence and analysis of chromosome 1 of the plant Arabidopsis thaliana.</title>
        <authorList>
            <person name="Theologis A."/>
            <person name="Ecker J.R."/>
            <person name="Palm C.J."/>
            <person name="Federspiel N.A."/>
            <person name="Kaul S."/>
            <person name="White O."/>
            <person name="Alonso J."/>
            <person name="Altafi H."/>
            <person name="Araujo R."/>
            <person name="Bowman C.L."/>
            <person name="Brooks S.Y."/>
            <person name="Buehler E."/>
            <person name="Chan A."/>
            <person name="Chao Q."/>
            <person name="Chen H."/>
            <person name="Cheuk R.F."/>
            <person name="Chin C.W."/>
            <person name="Chung M.K."/>
            <person name="Conn L."/>
            <person name="Conway A.B."/>
            <person name="Conway A.R."/>
            <person name="Creasy T.H."/>
            <person name="Dewar K."/>
            <person name="Dunn P."/>
            <person name="Etgu P."/>
            <person name="Feldblyum T.V."/>
            <person name="Feng J.-D."/>
            <person name="Fong B."/>
            <person name="Fujii C.Y."/>
            <person name="Gill J.E."/>
            <person name="Goldsmith A.D."/>
            <person name="Haas B."/>
            <person name="Hansen N.F."/>
            <person name="Hughes B."/>
            <person name="Huizar L."/>
            <person name="Hunter J.L."/>
            <person name="Jenkins J."/>
            <person name="Johnson-Hopson C."/>
            <person name="Khan S."/>
            <person name="Khaykin E."/>
            <person name="Kim C.J."/>
            <person name="Koo H.L."/>
            <person name="Kremenetskaia I."/>
            <person name="Kurtz D.B."/>
            <person name="Kwan A."/>
            <person name="Lam B."/>
            <person name="Langin-Hooper S."/>
            <person name="Lee A."/>
            <person name="Lee J.M."/>
            <person name="Lenz C.A."/>
            <person name="Li J.H."/>
            <person name="Li Y.-P."/>
            <person name="Lin X."/>
            <person name="Liu S.X."/>
            <person name="Liu Z.A."/>
            <person name="Luros J.S."/>
            <person name="Maiti R."/>
            <person name="Marziali A."/>
            <person name="Militscher J."/>
            <person name="Miranda M."/>
            <person name="Nguyen M."/>
            <person name="Nierman W.C."/>
            <person name="Osborne B.I."/>
            <person name="Pai G."/>
            <person name="Peterson J."/>
            <person name="Pham P.K."/>
            <person name="Rizzo M."/>
            <person name="Rooney T."/>
            <person name="Rowley D."/>
            <person name="Sakano H."/>
            <person name="Salzberg S.L."/>
            <person name="Schwartz J.R."/>
            <person name="Shinn P."/>
            <person name="Southwick A.M."/>
            <person name="Sun H."/>
            <person name="Tallon L.J."/>
            <person name="Tambunga G."/>
            <person name="Toriumi M.J."/>
            <person name="Town C.D."/>
            <person name="Utterback T."/>
            <person name="Van Aken S."/>
            <person name="Vaysberg M."/>
            <person name="Vysotskaia V.S."/>
            <person name="Walker M."/>
            <person name="Wu D."/>
            <person name="Yu G."/>
            <person name="Fraser C.M."/>
            <person name="Venter J.C."/>
            <person name="Davis R.W."/>
        </authorList>
    </citation>
    <scope>NUCLEOTIDE SEQUENCE [LARGE SCALE GENOMIC DNA]</scope>
    <source>
        <strain>cv. Columbia</strain>
    </source>
</reference>
<reference key="2">
    <citation type="journal article" date="2017" name="Plant J.">
        <title>Araport11: a complete reannotation of the Arabidopsis thaliana reference genome.</title>
        <authorList>
            <person name="Cheng C.Y."/>
            <person name="Krishnakumar V."/>
            <person name="Chan A.P."/>
            <person name="Thibaud-Nissen F."/>
            <person name="Schobel S."/>
            <person name="Town C.D."/>
        </authorList>
    </citation>
    <scope>GENOME REANNOTATION</scope>
    <source>
        <strain>cv. Columbia</strain>
    </source>
</reference>
<reference key="3">
    <citation type="journal article" date="2003" name="Science">
        <title>Empirical analysis of transcriptional activity in the Arabidopsis genome.</title>
        <authorList>
            <person name="Yamada K."/>
            <person name="Lim J."/>
            <person name="Dale J.M."/>
            <person name="Chen H."/>
            <person name="Shinn P."/>
            <person name="Palm C.J."/>
            <person name="Southwick A.M."/>
            <person name="Wu H.C."/>
            <person name="Kim C.J."/>
            <person name="Nguyen M."/>
            <person name="Pham P.K."/>
            <person name="Cheuk R.F."/>
            <person name="Karlin-Newmann G."/>
            <person name="Liu S.X."/>
            <person name="Lam B."/>
            <person name="Sakano H."/>
            <person name="Wu T."/>
            <person name="Yu G."/>
            <person name="Miranda M."/>
            <person name="Quach H.L."/>
            <person name="Tripp M."/>
            <person name="Chang C.H."/>
            <person name="Lee J.M."/>
            <person name="Toriumi M.J."/>
            <person name="Chan M.M."/>
            <person name="Tang C.C."/>
            <person name="Onodera C.S."/>
            <person name="Deng J.M."/>
            <person name="Akiyama K."/>
            <person name="Ansari Y."/>
            <person name="Arakawa T."/>
            <person name="Banh J."/>
            <person name="Banno F."/>
            <person name="Bowser L."/>
            <person name="Brooks S.Y."/>
            <person name="Carninci P."/>
            <person name="Chao Q."/>
            <person name="Choy N."/>
            <person name="Enju A."/>
            <person name="Goldsmith A.D."/>
            <person name="Gurjal M."/>
            <person name="Hansen N.F."/>
            <person name="Hayashizaki Y."/>
            <person name="Johnson-Hopson C."/>
            <person name="Hsuan V.W."/>
            <person name="Iida K."/>
            <person name="Karnes M."/>
            <person name="Khan S."/>
            <person name="Koesema E."/>
            <person name="Ishida J."/>
            <person name="Jiang P.X."/>
            <person name="Jones T."/>
            <person name="Kawai J."/>
            <person name="Kamiya A."/>
            <person name="Meyers C."/>
            <person name="Nakajima M."/>
            <person name="Narusaka M."/>
            <person name="Seki M."/>
            <person name="Sakurai T."/>
            <person name="Satou M."/>
            <person name="Tamse R."/>
            <person name="Vaysberg M."/>
            <person name="Wallender E.K."/>
            <person name="Wong C."/>
            <person name="Yamamura Y."/>
            <person name="Yuan S."/>
            <person name="Shinozaki K."/>
            <person name="Davis R.W."/>
            <person name="Theologis A."/>
            <person name="Ecker J.R."/>
        </authorList>
    </citation>
    <scope>NUCLEOTIDE SEQUENCE [LARGE SCALE MRNA]</scope>
    <source>
        <strain>cv. Columbia</strain>
    </source>
</reference>
<reference key="4">
    <citation type="submission" date="2002-03" db="EMBL/GenBank/DDBJ databases">
        <title>Full-length cDNA from Arabidopsis thaliana.</title>
        <authorList>
            <person name="Brover V.V."/>
            <person name="Troukhan M.E."/>
            <person name="Alexandrov N.A."/>
            <person name="Lu Y.-P."/>
            <person name="Flavell R.B."/>
            <person name="Feldmann K.A."/>
        </authorList>
    </citation>
    <scope>NUCLEOTIDE SEQUENCE [LARGE SCALE MRNA]</scope>
</reference>
<reference key="5">
    <citation type="journal article" date="2010" name="Nature">
        <title>Sugar transporters for intercellular exchange and nutrition of pathogens.</title>
        <authorList>
            <person name="Chen L.-Q."/>
            <person name="Hou B.-H."/>
            <person name="Lalonde S."/>
            <person name="Takanaga H."/>
            <person name="Hartung M.L."/>
            <person name="Qu X.-Q."/>
            <person name="Guo W.-J."/>
            <person name="Kim J.-G."/>
            <person name="Underwood W."/>
            <person name="Chaudhuri B."/>
            <person name="Chermak D."/>
            <person name="Antony G."/>
            <person name="White F.F."/>
            <person name="Somerville S.C."/>
            <person name="Mudgett M.B."/>
            <person name="Frommer W.B."/>
        </authorList>
    </citation>
    <scope>FUNCTION</scope>
    <scope>BIOPHYSICOCHEMICAL PROPERTIES</scope>
    <scope>SUBCELLULAR LOCATION</scope>
    <scope>TISSUE SPECIFICITY</scope>
    <scope>INDUCTION BY PATHOGENS</scope>
    <scope>DISRUPTION PHENOTYPE</scope>
    <scope>GENE FAMILY</scope>
    <scope>NOMENCLATURE</scope>
    <source>
        <strain>cv. Columbia</strain>
    </source>
</reference>
<reference key="6">
    <citation type="journal article" date="2013" name="Proc. Natl. Acad. Sci. U.S.A.">
        <title>Functional role of oligomerization for bacterial and plant SWEET sugar transporter family.</title>
        <authorList>
            <person name="Xuan Y.H."/>
            <person name="Hu Y.B."/>
            <person name="Chen L.-Q."/>
            <person name="Sosso D."/>
            <person name="Ducat D.C."/>
            <person name="Hou B.-H."/>
            <person name="Frommer W.B."/>
        </authorList>
    </citation>
    <scope>SUBUNIT</scope>
    <scope>INTERACTION WITH SWEET9; SWEET11; SWEET13; SWEET15; SWEET16 AND SWEET17</scope>
    <scope>MUTAGENESIS OF PRO-23; TYR-57; GLY-58 AND GLY-180</scope>
    <scope>SUBCELLULAR LOCATION</scope>
</reference>
<reference key="7">
    <citation type="journal article" date="2015" name="Curr. Opin. Plant Biol.">
        <title>SWEETs, transporters for intracellular and intercellular sugar translocation.</title>
        <authorList>
            <person name="Eom J.-S."/>
            <person name="Chen L.-Q."/>
            <person name="Sosso D."/>
            <person name="Julius B.T."/>
            <person name="Lin I.W."/>
            <person name="Qu X.-Q."/>
            <person name="Braun D.M."/>
            <person name="Frommer W.B."/>
        </authorList>
    </citation>
    <scope>REVIEW</scope>
    <source>
        <strain>cv. Columbia</strain>
    </source>
</reference>
<comment type="function">
    <text evidence="3">Mediates both low-affinity uptake and efflux of sugar across the plasma membrane. Can transport glucose, and, to a lower extent, mannose, fructose and galactose.</text>
</comment>
<comment type="biophysicochemical properties">
    <kinetics>
        <KM evidence="3">9 mM for glucose</KM>
        <Vmax evidence="3">51.7 pmol/sec/mg enzyme with glucose as substrate (for uptake)</Vmax>
    </kinetics>
    <phDependence>
        <text evidence="3">Optimum pH is 8.5 for uptake.</text>
    </phDependence>
</comment>
<comment type="subunit">
    <text evidence="4">Forms homooligomers and heterooligomers with SWEET9, SWEET11, SWEET13, SWEET15, SWEET16 and SWEET17.</text>
</comment>
<comment type="subcellular location">
    <subcellularLocation>
        <location evidence="3 4">Cell membrane</location>
        <topology evidence="3">Multi-pass membrane protein</topology>
    </subcellularLocation>
    <subcellularLocation>
        <location evidence="4">Endoplasmic reticulum membrane</location>
    </subcellularLocation>
</comment>
<comment type="tissue specificity">
    <text evidence="3">Mainly expressed in flowers.</text>
</comment>
<comment type="induction">
    <text evidence="3">Slightly induced by the powdery mildew fungus G.cichoracearum.</text>
</comment>
<comment type="disruption phenotype">
    <text evidence="3">Impaired glucose transport activity.</text>
</comment>
<comment type="similarity">
    <text evidence="6">Belongs to the SWEET sugar transporter family.</text>
</comment>
<comment type="sequence caution" evidence="6">
    <conflict type="erroneous gene model prediction">
        <sequence resource="EMBL-CDS" id="AAF87899"/>
    </conflict>
</comment>
<protein>
    <recommendedName>
        <fullName evidence="5">Bidirectional sugar transporter SWEET1</fullName>
        <shortName evidence="5">AtSWEET1</shortName>
    </recommendedName>
    <alternativeName>
        <fullName evidence="5">Protein SUGARS WILL EVENTUALLY BE EXPORTED TRANSPORTERS 1</fullName>
    </alternativeName>
</protein>
<keyword id="KW-1003">Cell membrane</keyword>
<keyword id="KW-0256">Endoplasmic reticulum</keyword>
<keyword id="KW-0472">Membrane</keyword>
<keyword id="KW-1185">Reference proteome</keyword>
<keyword id="KW-0677">Repeat</keyword>
<keyword id="KW-0762">Sugar transport</keyword>
<keyword id="KW-0812">Transmembrane</keyword>
<keyword id="KW-1133">Transmembrane helix</keyword>
<keyword id="KW-0813">Transport</keyword>
<accession>Q8L9J7</accession>
<accession>Q9LPL1</accession>
<organism>
    <name type="scientific">Arabidopsis thaliana</name>
    <name type="common">Mouse-ear cress</name>
    <dbReference type="NCBI Taxonomy" id="3702"/>
    <lineage>
        <taxon>Eukaryota</taxon>
        <taxon>Viridiplantae</taxon>
        <taxon>Streptophyta</taxon>
        <taxon>Embryophyta</taxon>
        <taxon>Tracheophyta</taxon>
        <taxon>Spermatophyta</taxon>
        <taxon>Magnoliopsida</taxon>
        <taxon>eudicotyledons</taxon>
        <taxon>Gunneridae</taxon>
        <taxon>Pentapetalae</taxon>
        <taxon>rosids</taxon>
        <taxon>malvids</taxon>
        <taxon>Brassicales</taxon>
        <taxon>Brassicaceae</taxon>
        <taxon>Camelineae</taxon>
        <taxon>Arabidopsis</taxon>
    </lineage>
</organism>
<feature type="chain" id="PRO_0000404102" description="Bidirectional sugar transporter SWEET1">
    <location>
        <begin position="1"/>
        <end position="247"/>
    </location>
</feature>
<feature type="topological domain" description="Extracellular" evidence="1">
    <location>
        <begin position="1"/>
        <end position="6"/>
    </location>
</feature>
<feature type="transmembrane region" description="Helical; Name=1" evidence="1">
    <location>
        <begin position="7"/>
        <end position="27"/>
    </location>
</feature>
<feature type="topological domain" description="Cytoplasmic" evidence="1">
    <location>
        <begin position="28"/>
        <end position="41"/>
    </location>
</feature>
<feature type="transmembrane region" description="Helical; Name=2" evidence="1">
    <location>
        <begin position="42"/>
        <end position="62"/>
    </location>
</feature>
<feature type="topological domain" description="Extracellular" evidence="1">
    <location>
        <begin position="63"/>
        <end position="71"/>
    </location>
</feature>
<feature type="transmembrane region" description="Helical; Name=3" evidence="1">
    <location>
        <begin position="72"/>
        <end position="92"/>
    </location>
</feature>
<feature type="topological domain" description="Cytoplasmic" evidence="1">
    <location>
        <begin position="93"/>
        <end position="98"/>
    </location>
</feature>
<feature type="transmembrane region" description="Helical; Name=4" evidence="1">
    <location>
        <begin position="99"/>
        <end position="119"/>
    </location>
</feature>
<feature type="topological domain" description="Extracellular" evidence="1">
    <location>
        <begin position="120"/>
        <end position="127"/>
    </location>
</feature>
<feature type="transmembrane region" description="Helical; Name=5" evidence="1">
    <location>
        <begin position="128"/>
        <end position="148"/>
    </location>
</feature>
<feature type="topological domain" description="Cytoplasmic" evidence="1">
    <location>
        <begin position="149"/>
        <end position="162"/>
    </location>
</feature>
<feature type="transmembrane region" description="Helical; Name=6" evidence="1">
    <location>
        <begin position="163"/>
        <end position="183"/>
    </location>
</feature>
<feature type="topological domain" description="Extracellular" evidence="1">
    <location>
        <begin position="184"/>
        <end position="187"/>
    </location>
</feature>
<feature type="transmembrane region" description="Helical; Name=7" evidence="1">
    <location>
        <begin position="188"/>
        <end position="208"/>
    </location>
</feature>
<feature type="topological domain" description="Cytoplasmic" evidence="1">
    <location>
        <begin position="209"/>
        <end position="247"/>
    </location>
</feature>
<feature type="domain" description="MtN3/slv 1">
    <location>
        <begin position="7"/>
        <end position="94"/>
    </location>
</feature>
<feature type="domain" description="MtN3/slv 2">
    <location>
        <begin position="130"/>
        <end position="213"/>
    </location>
</feature>
<feature type="region of interest" description="Disordered" evidence="2">
    <location>
        <begin position="221"/>
        <end position="247"/>
    </location>
</feature>
<feature type="compositionally biased region" description="Basic and acidic residues" evidence="2">
    <location>
        <begin position="221"/>
        <end position="236"/>
    </location>
</feature>
<feature type="compositionally biased region" description="Polar residues" evidence="2">
    <location>
        <begin position="237"/>
        <end position="247"/>
    </location>
</feature>
<feature type="mutagenesis site" description="Loss of sugar transport activity associated with reduced plasma membrane localization." evidence="4">
    <original>P</original>
    <variation>T</variation>
    <location>
        <position position="23"/>
    </location>
</feature>
<feature type="mutagenesis site" description="Loss of sugar transport activity associated with reduced plasma membrane localization." evidence="4">
    <original>Y</original>
    <variation>A</variation>
    <location>
        <position position="57"/>
    </location>
</feature>
<feature type="mutagenesis site" description="Loss of sugar transport activity associated with reduced plasma membrane localization." evidence="4">
    <original>G</original>
    <variation>D</variation>
    <location>
        <position position="58"/>
    </location>
</feature>
<feature type="mutagenesis site" description="Loss of sugar transport activity associated with reduced plasma membrane localization." evidence="4">
    <original>G</original>
    <variation>D</variation>
    <location>
        <position position="180"/>
    </location>
</feature>